<protein>
    <recommendedName>
        <fullName evidence="1">Mitochondrial distribution and morphology protein 10</fullName>
    </recommendedName>
    <alternativeName>
        <fullName evidence="1">Mitochondrial inheritance component MDM10</fullName>
    </alternativeName>
</protein>
<sequence length="493" mass="56239">MLPYMDQVLRAFYQSTHWSTQNSYEDITATSRTLLDFRIPSAIHLQISNKSTPNTFNSLDFSTRSRINGSLSYLYSDAQQLEKFMRNSTDIPLQDATETYRQLQPNLNYSVSSGNTLSSDNTTVDNDKKLLHDSKFVKKSLYYGRMYYPSSDLEAMIIKRLSPQTQFMLKGVSSFKESLNVLTCYFQRDSHRNLQEWIFSTSDLLCGYRVLHNFLTTPSKFNTSLYNNSSLSLGAEFWLGLVSLSPGCSTTLRYYTHSTNTGRPLTLTLSWNPLFGHISSTYSAKTGTNSTFCAKYDFNLYSIESNLSFGCEFWQKKHHLLETNKNNNDKLEPISDELVDINPNSRATKLLHENVPDLNSAVNDIPSTLDIPVHKQKLLNDLTYAFSSSLRKIDEERSTIEKFDNKINSSIFTSVWKLSTSLRDKTLKLLWEGKWRGFLISAGTELVFTRGFQESLSDDEKNDNAISISATDTENGNIPVFPAKFGIQFQYST</sequence>
<dbReference type="EMBL" id="AAFW02000160">
    <property type="protein sequence ID" value="EDN59754.1"/>
    <property type="molecule type" value="Genomic_DNA"/>
</dbReference>
<dbReference type="SMR" id="A7A0F9"/>
<dbReference type="HOGENOM" id="CLU_026505_0_0_1"/>
<dbReference type="Proteomes" id="UP000007060">
    <property type="component" value="Unassembled WGS sequence"/>
</dbReference>
<dbReference type="GO" id="GO:0032865">
    <property type="term" value="C:ERMES complex"/>
    <property type="evidence" value="ECO:0007669"/>
    <property type="project" value="UniProtKB-UniRule"/>
</dbReference>
<dbReference type="GO" id="GO:0001401">
    <property type="term" value="C:SAM complex"/>
    <property type="evidence" value="ECO:0007669"/>
    <property type="project" value="TreeGrafter"/>
</dbReference>
<dbReference type="GO" id="GO:0051654">
    <property type="term" value="P:establishment of mitochondrion localization"/>
    <property type="evidence" value="ECO:0007669"/>
    <property type="project" value="TreeGrafter"/>
</dbReference>
<dbReference type="GO" id="GO:0000002">
    <property type="term" value="P:mitochondrial genome maintenance"/>
    <property type="evidence" value="ECO:0007669"/>
    <property type="project" value="UniProtKB-UniRule"/>
</dbReference>
<dbReference type="GO" id="GO:0070096">
    <property type="term" value="P:mitochondrial outer membrane translocase complex assembly"/>
    <property type="evidence" value="ECO:0007669"/>
    <property type="project" value="UniProtKB-UniRule"/>
</dbReference>
<dbReference type="GO" id="GO:1990456">
    <property type="term" value="P:mitochondrion-endoplasmic reticulum membrane tethering"/>
    <property type="evidence" value="ECO:0007669"/>
    <property type="project" value="UniProtKB-UniRule"/>
</dbReference>
<dbReference type="GO" id="GO:0015914">
    <property type="term" value="P:phospholipid transport"/>
    <property type="evidence" value="ECO:0007669"/>
    <property type="project" value="TreeGrafter"/>
</dbReference>
<dbReference type="GO" id="GO:0045040">
    <property type="term" value="P:protein insertion into mitochondrial outer membrane"/>
    <property type="evidence" value="ECO:0007669"/>
    <property type="project" value="UniProtKB-UniRule"/>
</dbReference>
<dbReference type="HAMAP" id="MF_03102">
    <property type="entry name" value="Mdm10"/>
    <property type="match status" value="1"/>
</dbReference>
<dbReference type="InterPro" id="IPR027539">
    <property type="entry name" value="Mdm10"/>
</dbReference>
<dbReference type="PANTHER" id="PTHR28035">
    <property type="entry name" value="MITOCHONDRIAL DISTRIBUTION AND MORPHOLOGY PROTEIN 10"/>
    <property type="match status" value="1"/>
</dbReference>
<dbReference type="PANTHER" id="PTHR28035:SF1">
    <property type="entry name" value="MITOCHONDRIAL DISTRIBUTION AND MORPHOLOGY PROTEIN 10"/>
    <property type="match status" value="1"/>
</dbReference>
<dbReference type="Pfam" id="PF12519">
    <property type="entry name" value="MDM10"/>
    <property type="match status" value="1"/>
</dbReference>
<proteinExistence type="inferred from homology"/>
<keyword id="KW-0472">Membrane</keyword>
<keyword id="KW-0496">Mitochondrion</keyword>
<keyword id="KW-1000">Mitochondrion outer membrane</keyword>
<keyword id="KW-0812">Transmembrane</keyword>
<keyword id="KW-1134">Transmembrane beta strand</keyword>
<reference key="1">
    <citation type="journal article" date="2007" name="Proc. Natl. Acad. Sci. U.S.A.">
        <title>Genome sequencing and comparative analysis of Saccharomyces cerevisiae strain YJM789.</title>
        <authorList>
            <person name="Wei W."/>
            <person name="McCusker J.H."/>
            <person name="Hyman R.W."/>
            <person name="Jones T."/>
            <person name="Ning Y."/>
            <person name="Cao Z."/>
            <person name="Gu Z."/>
            <person name="Bruno D."/>
            <person name="Miranda M."/>
            <person name="Nguyen M."/>
            <person name="Wilhelmy J."/>
            <person name="Komp C."/>
            <person name="Tamse R."/>
            <person name="Wang X."/>
            <person name="Jia P."/>
            <person name="Luedi P."/>
            <person name="Oefner P.J."/>
            <person name="David L."/>
            <person name="Dietrich F.S."/>
            <person name="Li Y."/>
            <person name="Davis R.W."/>
            <person name="Steinmetz L.M."/>
        </authorList>
    </citation>
    <scope>NUCLEOTIDE SEQUENCE [LARGE SCALE GENOMIC DNA]</scope>
    <source>
        <strain>YJM789</strain>
    </source>
</reference>
<evidence type="ECO:0000255" key="1">
    <source>
        <dbReference type="HAMAP-Rule" id="MF_03102"/>
    </source>
</evidence>
<comment type="function">
    <text evidence="1">Component of the ERMES/MDM complex, which serves as a molecular tether to connect the endoplasmic reticulum and mitochondria. Components of this complex are involved in the control of mitochondrial shape and protein biogenesis and may function in phospholipid exchange. MDM10 is involved in the late assembly steps of the general translocase of the mitochondrial outer membrane (TOM complex). Functions in the TOM40-specific route of the assembly of outer membrane beta-barrel proteins, including the association of TOM40 with the receptor TOM22 and small TOM proteins. Can associate with the SAM(core) complex as well as the MDM12-MMM1 complex, both involved in late steps of the major beta-barrel assembly pathway, that is responsible for biogenesis of all outer membrane beta-barrel proteins. May act as a switch that shuttles between both complexes and channels precursor proteins into the TOM40-specific pathway. Plays a role in mitochondrial morphology and in the inheritance of mitochondria.</text>
</comment>
<comment type="subunit">
    <text evidence="1">Component of the ER-mitochondria encounter structure (ERMES) or MDM complex, composed of MMM1, MDM10, MDM12 and MDM34. Associates with the mitochondrial outer membrane sorting assembly machinery SAM(core) complex, which consists of SAM35, SAM37 and SAM50, to form a SAM(holo) complex.</text>
</comment>
<comment type="subcellular location">
    <subcellularLocation>
        <location evidence="1">Mitochondrion outer membrane</location>
        <topology evidence="1">Multi-pass membrane protein</topology>
    </subcellularLocation>
    <text evidence="1">The ERMES/MDM complex localizes to a few discrete foci (around 10 per single cell), that represent mitochondria-endoplasmic reticulum junctions. These foci are often found next to mtDNA nucleoids.</text>
</comment>
<comment type="domain">
    <text>Lacks alpha-helical transmembrane segments, suggesting that it resides in the membrane via beta-sheet conformations similar to those predicted for other outer membrane proteins and porin.</text>
</comment>
<comment type="similarity">
    <text evidence="1">Belongs to the MDM10 family.</text>
</comment>
<accession>A7A0F9</accession>
<feature type="chain" id="PRO_0000384199" description="Mitochondrial distribution and morphology protein 10">
    <location>
        <begin position="1"/>
        <end position="493"/>
    </location>
</feature>
<name>MDM10_YEAS7</name>
<organism>
    <name type="scientific">Saccharomyces cerevisiae (strain YJM789)</name>
    <name type="common">Baker's yeast</name>
    <dbReference type="NCBI Taxonomy" id="307796"/>
    <lineage>
        <taxon>Eukaryota</taxon>
        <taxon>Fungi</taxon>
        <taxon>Dikarya</taxon>
        <taxon>Ascomycota</taxon>
        <taxon>Saccharomycotina</taxon>
        <taxon>Saccharomycetes</taxon>
        <taxon>Saccharomycetales</taxon>
        <taxon>Saccharomycetaceae</taxon>
        <taxon>Saccharomyces</taxon>
    </lineage>
</organism>
<gene>
    <name evidence="1" type="primary">MDM10</name>
    <name type="ORF">SCY_0070</name>
</gene>